<evidence type="ECO:0000250" key="1"/>
<evidence type="ECO:0000250" key="2">
    <source>
        <dbReference type="UniProtKB" id="Q96FE5"/>
    </source>
</evidence>
<evidence type="ECO:0000250" key="3">
    <source>
        <dbReference type="UniProtKB" id="Q9D1T0"/>
    </source>
</evidence>
<evidence type="ECO:0000255" key="4"/>
<evidence type="ECO:0000255" key="5">
    <source>
        <dbReference type="PROSITE-ProRule" id="PRU00114"/>
    </source>
</evidence>
<protein>
    <recommendedName>
        <fullName>Leucine-rich repeat and immunoglobulin-like domain-containing nogo receptor-interacting protein 1</fullName>
    </recommendedName>
</protein>
<reference key="1">
    <citation type="journal article" date="2001" name="Gene">
        <title>Assignment of 118 novel cDNAs of cynomolgus monkey brain to human chromosomes.</title>
        <authorList>
            <person name="Osada N."/>
            <person name="Hida M."/>
            <person name="Kususda J."/>
            <person name="Tanuma R."/>
            <person name="Iseki K."/>
            <person name="Hirata M."/>
            <person name="Suto Y."/>
            <person name="Hirai M."/>
            <person name="Terao K."/>
            <person name="Suzuki Y."/>
            <person name="Sugano S."/>
            <person name="Hashimoto K."/>
        </authorList>
    </citation>
    <scope>NUCLEOTIDE SEQUENCE [LARGE SCALE MRNA]</scope>
    <source>
        <tissue>Brain cortex</tissue>
    </source>
</reference>
<reference key="2">
    <citation type="journal article" date="2001" name="Gene">
        <authorList>
            <person name="Osada N."/>
            <person name="Hida M."/>
            <person name="Kusuda J."/>
            <person name="Tanuma R."/>
            <person name="Iseki K."/>
            <person name="Hirata M."/>
            <person name="Suto Y."/>
            <person name="Hirai M."/>
            <person name="Terao K."/>
            <person name="Suzuki Y."/>
            <person name="Sugano S."/>
            <person name="Hashimoto K."/>
            <person name="Kususda J."/>
        </authorList>
    </citation>
    <scope>ERRATUM OF PUBMED:11574149</scope>
</reference>
<keyword id="KW-1003">Cell membrane</keyword>
<keyword id="KW-1015">Disulfide bond</keyword>
<keyword id="KW-0325">Glycoprotein</keyword>
<keyword id="KW-0393">Immunoglobulin domain</keyword>
<keyword id="KW-0433">Leucine-rich repeat</keyword>
<keyword id="KW-0472">Membrane</keyword>
<keyword id="KW-0597">Phosphoprotein</keyword>
<keyword id="KW-1185">Reference proteome</keyword>
<keyword id="KW-0677">Repeat</keyword>
<keyword id="KW-0732">Signal</keyword>
<keyword id="KW-0812">Transmembrane</keyword>
<keyword id="KW-1133">Transmembrane helix</keyword>
<comment type="function">
    <text evidence="2 3">Functional component of the Nogo receptor signaling complex (RTN4R/NGFR) in RhoA activation responsible for some inhibition of axonal regeneration by myelin-associated factors. Is also an important negative regulator of oligodentrocyte differentiation and axonal myelination. Acts in conjunction with RTN4 and RTN4R in regulating neuronal precursor cell motility during cortical development (By similarity).</text>
</comment>
<comment type="subunit">
    <text evidence="2 3">Homotetramer. Forms a ternary complex with RTN4R/NGFR and RTN4R/TNFRSF19 (By similarity). Interacts with NGRF, RTN4R and MYT1L (By similarity).</text>
</comment>
<comment type="subcellular location">
    <subcellularLocation>
        <location evidence="3">Cell membrane</location>
        <topology evidence="3">Single-pass type I membrane protein</topology>
    </subcellularLocation>
</comment>
<comment type="domain">
    <text evidence="3">The intracellular domain of LINGO1 interacts with MYT1L.</text>
</comment>
<comment type="PTM">
    <text evidence="1">N-glycosylated. Contains predominantly high-mannose glycans (By similarity).</text>
</comment>
<gene>
    <name type="primary">LINGO1</name>
    <name type="ORF">QccE-15489</name>
</gene>
<name>LIGO1_MACFA</name>
<sequence length="614" mass="69188">MLAGGVRSMPSPLLACWQPILLLVLGSVLSGSATGCPPRCECSAQDRAVLCHRKRFVAVPEGIPTETRLLDLGKNRIKTLNQDEFASFPHLEELELNENIVSAVEPGAFNNLFNLRTLGLRSNRLKLIPLGVFTGLSNLTKLDISENKIVILLDYMFQDLYNLKSLEVGDNDLVYISHRAFSGLNSLEQLTLEKCNLTSIPTEALSHLHGLIVLRLRHLNINAIRDYSFKRLYRLKVLEISHWPYLDTMTPNCLYGLNLTSLSITHCNLTAVPYLAVRHLVYLRFLNLSYNPISTIEGSMLHELLRLQEIQLVGGQLAMVEPYAFRGLNYLRVLNVSGNQLTTLEESVFHSVGNLETLILDSNPLACDCRLLWVFRRRWRLNFNRQQPTCATPEFVQGKEFKDFPDVLLPNYFTCRRARIRDRKAQQVFVDEGHTVQFVCRADGDPPPAILWLSPRKHLVSAKSNGRLTVFPDGTLEVRYAQVQDNGTYLCIAANAGGNDSMPAHLHVRSYSPDWPHQPNKTFAFIPNQPGEGEANSTRATVPFPFDIKTLIIATTMGFISFLGVVLFCLVLLFLWSRGKGNTKHNIEIEYVPRKSDAGISSADAPRKFNMKMI</sequence>
<proteinExistence type="evidence at transcript level"/>
<accession>Q9N008</accession>
<feature type="signal peptide" evidence="4">
    <location>
        <begin position="1"/>
        <end position="35"/>
    </location>
</feature>
<feature type="chain" id="PRO_0000328644" description="Leucine-rich repeat and immunoglobulin-like domain-containing nogo receptor-interacting protein 1">
    <location>
        <begin position="36"/>
        <end position="614"/>
    </location>
</feature>
<feature type="topological domain" description="Extracellular" evidence="4">
    <location>
        <begin position="36"/>
        <end position="555"/>
    </location>
</feature>
<feature type="transmembrane region" description="Helical" evidence="4">
    <location>
        <begin position="556"/>
        <end position="576"/>
    </location>
</feature>
<feature type="topological domain" description="Cytoplasmic" evidence="4">
    <location>
        <begin position="577"/>
        <end position="614"/>
    </location>
</feature>
<feature type="domain" description="LRRNT">
    <location>
        <begin position="36"/>
        <end position="65"/>
    </location>
</feature>
<feature type="repeat" description="LRR 1">
    <location>
        <begin position="66"/>
        <end position="87"/>
    </location>
</feature>
<feature type="repeat" description="LRR 2">
    <location>
        <begin position="90"/>
        <end position="111"/>
    </location>
</feature>
<feature type="repeat" description="LRR 3">
    <location>
        <begin position="114"/>
        <end position="135"/>
    </location>
</feature>
<feature type="repeat" description="LRR 4">
    <location>
        <begin position="138"/>
        <end position="159"/>
    </location>
</feature>
<feature type="repeat" description="LRR 5">
    <location>
        <begin position="162"/>
        <end position="183"/>
    </location>
</feature>
<feature type="repeat" description="LRR 6">
    <location>
        <begin position="186"/>
        <end position="207"/>
    </location>
</feature>
<feature type="repeat" description="LRR 7">
    <location>
        <begin position="210"/>
        <end position="231"/>
    </location>
</feature>
<feature type="repeat" description="LRR 8">
    <location>
        <begin position="258"/>
        <end position="279"/>
    </location>
</feature>
<feature type="repeat" description="LRR 9">
    <location>
        <begin position="282"/>
        <end position="303"/>
    </location>
</feature>
<feature type="repeat" description="LRR 10">
    <location>
        <begin position="306"/>
        <end position="327"/>
    </location>
</feature>
<feature type="repeat" description="LRR 11">
    <location>
        <begin position="330"/>
        <end position="351"/>
    </location>
</feature>
<feature type="domain" description="LRRCT">
    <location>
        <begin position="363"/>
        <end position="417"/>
    </location>
</feature>
<feature type="domain" description="Ig-like C2-type">
    <location>
        <begin position="405"/>
        <end position="507"/>
    </location>
</feature>
<feature type="modified residue" description="Phosphoserine" evidence="3">
    <location>
        <position position="596"/>
    </location>
</feature>
<feature type="glycosylation site" description="N-linked (GlcNAc...) asparagine" evidence="4">
    <location>
        <position position="138"/>
    </location>
</feature>
<feature type="glycosylation site" description="N-linked (GlcNAc...) asparagine" evidence="4">
    <location>
        <position position="196"/>
    </location>
</feature>
<feature type="glycosylation site" description="N-linked (GlcNAc...) asparagine" evidence="4">
    <location>
        <position position="258"/>
    </location>
</feature>
<feature type="glycosylation site" description="N-linked (GlcNAc...) asparagine" evidence="4">
    <location>
        <position position="268"/>
    </location>
</feature>
<feature type="glycosylation site" description="N-linked (GlcNAc...) asparagine" evidence="4">
    <location>
        <position position="287"/>
    </location>
</feature>
<feature type="glycosylation site" description="N-linked (GlcNAc...) asparagine" evidence="4">
    <location>
        <position position="335"/>
    </location>
</feature>
<feature type="glycosylation site" description="N-linked (GlcNAc...) asparagine" evidence="4">
    <location>
        <position position="486"/>
    </location>
</feature>
<feature type="glycosylation site" description="N-linked (GlcNAc...) asparagine" evidence="4">
    <location>
        <position position="536"/>
    </location>
</feature>
<feature type="disulfide bond" evidence="5">
    <location>
        <begin position="36"/>
        <end position="42"/>
    </location>
</feature>
<feature type="disulfide bond" evidence="5">
    <location>
        <begin position="40"/>
        <end position="51"/>
    </location>
</feature>
<feature type="disulfide bond" evidence="5">
    <location>
        <begin position="367"/>
        <end position="390"/>
    </location>
</feature>
<feature type="disulfide bond" evidence="5">
    <location>
        <begin position="369"/>
        <end position="415"/>
    </location>
</feature>
<feature type="disulfide bond" evidence="5">
    <location>
        <begin position="440"/>
        <end position="491"/>
    </location>
</feature>
<organism>
    <name type="scientific">Macaca fascicularis</name>
    <name type="common">Crab-eating macaque</name>
    <name type="synonym">Cynomolgus monkey</name>
    <dbReference type="NCBI Taxonomy" id="9541"/>
    <lineage>
        <taxon>Eukaryota</taxon>
        <taxon>Metazoa</taxon>
        <taxon>Chordata</taxon>
        <taxon>Craniata</taxon>
        <taxon>Vertebrata</taxon>
        <taxon>Euteleostomi</taxon>
        <taxon>Mammalia</taxon>
        <taxon>Eutheria</taxon>
        <taxon>Euarchontoglires</taxon>
        <taxon>Primates</taxon>
        <taxon>Haplorrhini</taxon>
        <taxon>Catarrhini</taxon>
        <taxon>Cercopithecidae</taxon>
        <taxon>Cercopithecinae</taxon>
        <taxon>Macaca</taxon>
    </lineage>
</organism>
<dbReference type="EMBL" id="AB046639">
    <property type="protein sequence ID" value="BAB03557.1"/>
    <property type="molecule type" value="mRNA"/>
</dbReference>
<dbReference type="RefSeq" id="NP_001306386.1">
    <property type="nucleotide sequence ID" value="NM_001319457.1"/>
</dbReference>
<dbReference type="SMR" id="Q9N008"/>
<dbReference type="STRING" id="9541.ENSMFAP00000010806"/>
<dbReference type="GlyCosmos" id="Q9N008">
    <property type="glycosylation" value="8 sites, No reported glycans"/>
</dbReference>
<dbReference type="eggNOG" id="KOG0619">
    <property type="taxonomic scope" value="Eukaryota"/>
</dbReference>
<dbReference type="Proteomes" id="UP000233100">
    <property type="component" value="Unplaced"/>
</dbReference>
<dbReference type="GO" id="GO:0005886">
    <property type="term" value="C:plasma membrane"/>
    <property type="evidence" value="ECO:0007669"/>
    <property type="project" value="UniProtKB-SubCell"/>
</dbReference>
<dbReference type="CDD" id="cd20969">
    <property type="entry name" value="IgI_Lingo-1"/>
    <property type="match status" value="1"/>
</dbReference>
<dbReference type="FunFam" id="2.60.40.10:FF:000076">
    <property type="entry name" value="Leucine-rich repeat and Ig domain-containing 4"/>
    <property type="match status" value="1"/>
</dbReference>
<dbReference type="FunFam" id="3.80.10.10:FF:000014">
    <property type="entry name" value="Leucine-rich repeat and immunoglobulin-like domain-containing nogo receptor-interacting protein 1"/>
    <property type="match status" value="1"/>
</dbReference>
<dbReference type="Gene3D" id="2.60.40.10">
    <property type="entry name" value="Immunoglobulins"/>
    <property type="match status" value="1"/>
</dbReference>
<dbReference type="Gene3D" id="3.80.10.10">
    <property type="entry name" value="Ribonuclease Inhibitor"/>
    <property type="match status" value="1"/>
</dbReference>
<dbReference type="InterPro" id="IPR007110">
    <property type="entry name" value="Ig-like_dom"/>
</dbReference>
<dbReference type="InterPro" id="IPR036179">
    <property type="entry name" value="Ig-like_dom_sf"/>
</dbReference>
<dbReference type="InterPro" id="IPR013783">
    <property type="entry name" value="Ig-like_fold"/>
</dbReference>
<dbReference type="InterPro" id="IPR013098">
    <property type="entry name" value="Ig_I-set"/>
</dbReference>
<dbReference type="InterPro" id="IPR003599">
    <property type="entry name" value="Ig_sub"/>
</dbReference>
<dbReference type="InterPro" id="IPR003598">
    <property type="entry name" value="Ig_sub2"/>
</dbReference>
<dbReference type="InterPro" id="IPR001611">
    <property type="entry name" value="Leu-rich_rpt"/>
</dbReference>
<dbReference type="InterPro" id="IPR003591">
    <property type="entry name" value="Leu-rich_rpt_typical-subtyp"/>
</dbReference>
<dbReference type="InterPro" id="IPR026906">
    <property type="entry name" value="LRR_5"/>
</dbReference>
<dbReference type="InterPro" id="IPR032675">
    <property type="entry name" value="LRR_dom_sf"/>
</dbReference>
<dbReference type="InterPro" id="IPR050541">
    <property type="entry name" value="LRR_TM_domain-containing"/>
</dbReference>
<dbReference type="InterPro" id="IPR000372">
    <property type="entry name" value="LRRNT"/>
</dbReference>
<dbReference type="PANTHER" id="PTHR24369">
    <property type="entry name" value="ANTIGEN BSP, PUTATIVE-RELATED"/>
    <property type="match status" value="1"/>
</dbReference>
<dbReference type="PANTHER" id="PTHR24369:SF178">
    <property type="entry name" value="LEUCINE-RICH REPEAT AND IMMUNOGLOBULIN-LIKE DOMAIN-CONTAINING NOGO RECEPTOR-INTERACTING PROTEIN 1"/>
    <property type="match status" value="1"/>
</dbReference>
<dbReference type="Pfam" id="PF07679">
    <property type="entry name" value="I-set"/>
    <property type="match status" value="1"/>
</dbReference>
<dbReference type="Pfam" id="PF13306">
    <property type="entry name" value="LRR_5"/>
    <property type="match status" value="1"/>
</dbReference>
<dbReference type="Pfam" id="PF13855">
    <property type="entry name" value="LRR_8"/>
    <property type="match status" value="2"/>
</dbReference>
<dbReference type="SMART" id="SM00409">
    <property type="entry name" value="IG"/>
    <property type="match status" value="1"/>
</dbReference>
<dbReference type="SMART" id="SM00408">
    <property type="entry name" value="IGc2"/>
    <property type="match status" value="1"/>
</dbReference>
<dbReference type="SMART" id="SM00369">
    <property type="entry name" value="LRR_TYP"/>
    <property type="match status" value="9"/>
</dbReference>
<dbReference type="SMART" id="SM00013">
    <property type="entry name" value="LRRNT"/>
    <property type="match status" value="1"/>
</dbReference>
<dbReference type="SUPFAM" id="SSF48726">
    <property type="entry name" value="Immunoglobulin"/>
    <property type="match status" value="1"/>
</dbReference>
<dbReference type="SUPFAM" id="SSF52058">
    <property type="entry name" value="L domain-like"/>
    <property type="match status" value="1"/>
</dbReference>
<dbReference type="PROSITE" id="PS50835">
    <property type="entry name" value="IG_LIKE"/>
    <property type="match status" value="1"/>
</dbReference>
<dbReference type="PROSITE" id="PS51450">
    <property type="entry name" value="LRR"/>
    <property type="match status" value="10"/>
</dbReference>